<evidence type="ECO:0000255" key="1">
    <source>
        <dbReference type="HAMAP-Rule" id="MF_01382"/>
    </source>
</evidence>
<sequence>MANILRTVIENDKGELKKLDKIAKKVDSYADHMAALSDEALQAKTPEFKERYQNGETLDQLLPEAFAVVREASKRVLGLYPYHVQIMGGIVLHHGDIPEMRTGEGKTLTATMPVYLNAISGLGVHVITVNEYLSTRDATEMGEVYSWLGLSVGINLAAKSPFEKREAYNCDITYSTNAEVGFDYLRDNMVVRQEDMVQRPLNYALVDEVDSVLIDEARTPLIVSGPVSSEMNQLYTRADMFVKTLNSDDYIIDVPTKTIGLSDTGIDKAENYFHLNNLYDLENVALTHYIDNALRANYIMLLNIDYVVSEEQEILIVDQFTGRTMEGRRFSDGLHQAIEAKESVPIQEESKTSASITYQNMFRMYHKLAGMTGTGKTEEEEFREIYNMRVIPIPTNRPVQRIDHSDLLYPTLDSKFRAVVADVKERYEQGQPVLVGTVAVETSDLISRKLVAAGVPHEVLNAKNHFKEAQIIMNAGQRGAVTIATNMAGRGTDIKLGEGVRELGGLCVIGTERHESRRIDNQLRGRSGRQGDPGESQFYLSLEDDLMRRFGTDRIKVVLERMNLAEDDTVIKSKMLTRQVESAQRRVEGNNYDTRKQVLQYDDVMREQREIIYANRREVITAERDLGPELKGMIKRTIKRAVDAHSRSDKNTAAEAIVNFARSALLDEEAITVSELRGLKEAEIKELLYERALAVYEQQIAKLKDPEAIIEFQKVLILMVVDNQWTEHIDALDQLRNSVGLRGYAQNNPIVEYQSEGFRMFQDMIGSIEFDVTRTLMKAQIHEQERERASQHATTTAEQNISAQHVPMNNESPEYQGIKRNDKCPCGSGMKFKNCHGLRCLQ</sequence>
<keyword id="KW-0067">ATP-binding</keyword>
<keyword id="KW-1003">Cell membrane</keyword>
<keyword id="KW-0963">Cytoplasm</keyword>
<keyword id="KW-0472">Membrane</keyword>
<keyword id="KW-0479">Metal-binding</keyword>
<keyword id="KW-0547">Nucleotide-binding</keyword>
<keyword id="KW-0653">Protein transport</keyword>
<keyword id="KW-1278">Translocase</keyword>
<keyword id="KW-0811">Translocation</keyword>
<keyword id="KW-0813">Transport</keyword>
<keyword id="KW-0862">Zinc</keyword>
<dbReference type="EC" id="7.4.2.8" evidence="1"/>
<dbReference type="EMBL" id="AL766852">
    <property type="protein sequence ID" value="CAD47390.1"/>
    <property type="molecule type" value="Genomic_DNA"/>
</dbReference>
<dbReference type="SMR" id="Q8E3M6"/>
<dbReference type="KEGG" id="san:gbs1731"/>
<dbReference type="eggNOG" id="COG0653">
    <property type="taxonomic scope" value="Bacteria"/>
</dbReference>
<dbReference type="HOGENOM" id="CLU_005314_3_0_9"/>
<dbReference type="Proteomes" id="UP000000823">
    <property type="component" value="Chromosome"/>
</dbReference>
<dbReference type="GO" id="GO:0031522">
    <property type="term" value="C:cell envelope Sec protein transport complex"/>
    <property type="evidence" value="ECO:0007669"/>
    <property type="project" value="TreeGrafter"/>
</dbReference>
<dbReference type="GO" id="GO:0005829">
    <property type="term" value="C:cytosol"/>
    <property type="evidence" value="ECO:0007669"/>
    <property type="project" value="TreeGrafter"/>
</dbReference>
<dbReference type="GO" id="GO:0005886">
    <property type="term" value="C:plasma membrane"/>
    <property type="evidence" value="ECO:0007669"/>
    <property type="project" value="UniProtKB-SubCell"/>
</dbReference>
<dbReference type="GO" id="GO:0005524">
    <property type="term" value="F:ATP binding"/>
    <property type="evidence" value="ECO:0007669"/>
    <property type="project" value="UniProtKB-UniRule"/>
</dbReference>
<dbReference type="GO" id="GO:0046872">
    <property type="term" value="F:metal ion binding"/>
    <property type="evidence" value="ECO:0007669"/>
    <property type="project" value="UniProtKB-KW"/>
</dbReference>
<dbReference type="GO" id="GO:0008564">
    <property type="term" value="F:protein-exporting ATPase activity"/>
    <property type="evidence" value="ECO:0007669"/>
    <property type="project" value="UniProtKB-EC"/>
</dbReference>
<dbReference type="GO" id="GO:0065002">
    <property type="term" value="P:intracellular protein transmembrane transport"/>
    <property type="evidence" value="ECO:0007669"/>
    <property type="project" value="UniProtKB-UniRule"/>
</dbReference>
<dbReference type="GO" id="GO:0017038">
    <property type="term" value="P:protein import"/>
    <property type="evidence" value="ECO:0007669"/>
    <property type="project" value="InterPro"/>
</dbReference>
<dbReference type="GO" id="GO:0006605">
    <property type="term" value="P:protein targeting"/>
    <property type="evidence" value="ECO:0007669"/>
    <property type="project" value="UniProtKB-UniRule"/>
</dbReference>
<dbReference type="GO" id="GO:0043952">
    <property type="term" value="P:protein transport by the Sec complex"/>
    <property type="evidence" value="ECO:0007669"/>
    <property type="project" value="TreeGrafter"/>
</dbReference>
<dbReference type="CDD" id="cd17928">
    <property type="entry name" value="DEXDc_SecA"/>
    <property type="match status" value="1"/>
</dbReference>
<dbReference type="CDD" id="cd18803">
    <property type="entry name" value="SF2_C_secA"/>
    <property type="match status" value="1"/>
</dbReference>
<dbReference type="FunFam" id="1.10.3060.10:FF:000002">
    <property type="entry name" value="Preprotein translocase subunit SecA"/>
    <property type="match status" value="1"/>
</dbReference>
<dbReference type="FunFam" id="3.40.50.300:FF:000429">
    <property type="entry name" value="Preprotein translocase subunit SecA"/>
    <property type="match status" value="1"/>
</dbReference>
<dbReference type="FunFam" id="3.90.1440.10:FF:000001">
    <property type="entry name" value="Preprotein translocase subunit SecA"/>
    <property type="match status" value="1"/>
</dbReference>
<dbReference type="Gene3D" id="1.10.3060.10">
    <property type="entry name" value="Helical scaffold and wing domains of SecA"/>
    <property type="match status" value="1"/>
</dbReference>
<dbReference type="Gene3D" id="3.40.50.300">
    <property type="entry name" value="P-loop containing nucleotide triphosphate hydrolases"/>
    <property type="match status" value="3"/>
</dbReference>
<dbReference type="Gene3D" id="3.90.1440.10">
    <property type="entry name" value="SecA, preprotein cross-linking domain"/>
    <property type="match status" value="1"/>
</dbReference>
<dbReference type="HAMAP" id="MF_01382">
    <property type="entry name" value="SecA"/>
    <property type="match status" value="1"/>
</dbReference>
<dbReference type="InterPro" id="IPR014001">
    <property type="entry name" value="Helicase_ATP-bd"/>
</dbReference>
<dbReference type="InterPro" id="IPR001650">
    <property type="entry name" value="Helicase_C-like"/>
</dbReference>
<dbReference type="InterPro" id="IPR027417">
    <property type="entry name" value="P-loop_NTPase"/>
</dbReference>
<dbReference type="InterPro" id="IPR004027">
    <property type="entry name" value="SEC_C_motif"/>
</dbReference>
<dbReference type="InterPro" id="IPR000185">
    <property type="entry name" value="SecA"/>
</dbReference>
<dbReference type="InterPro" id="IPR020937">
    <property type="entry name" value="SecA_CS"/>
</dbReference>
<dbReference type="InterPro" id="IPR011115">
    <property type="entry name" value="SecA_DEAD"/>
</dbReference>
<dbReference type="InterPro" id="IPR014018">
    <property type="entry name" value="SecA_motor_DEAD"/>
</dbReference>
<dbReference type="InterPro" id="IPR011130">
    <property type="entry name" value="SecA_preprotein_X-link_dom"/>
</dbReference>
<dbReference type="InterPro" id="IPR044722">
    <property type="entry name" value="SecA_SF2_C"/>
</dbReference>
<dbReference type="InterPro" id="IPR011116">
    <property type="entry name" value="SecA_Wing/Scaffold"/>
</dbReference>
<dbReference type="InterPro" id="IPR036266">
    <property type="entry name" value="SecA_Wing/Scaffold_sf"/>
</dbReference>
<dbReference type="InterPro" id="IPR036670">
    <property type="entry name" value="SecA_X-link_sf"/>
</dbReference>
<dbReference type="NCBIfam" id="NF006630">
    <property type="entry name" value="PRK09200.1"/>
    <property type="match status" value="1"/>
</dbReference>
<dbReference type="NCBIfam" id="TIGR00963">
    <property type="entry name" value="secA"/>
    <property type="match status" value="1"/>
</dbReference>
<dbReference type="PANTHER" id="PTHR30612:SF0">
    <property type="entry name" value="CHLOROPLAST PROTEIN-TRANSPORTING ATPASE"/>
    <property type="match status" value="1"/>
</dbReference>
<dbReference type="PANTHER" id="PTHR30612">
    <property type="entry name" value="SECA INNER MEMBRANE COMPONENT OF SEC PROTEIN SECRETION SYSTEM"/>
    <property type="match status" value="1"/>
</dbReference>
<dbReference type="Pfam" id="PF21090">
    <property type="entry name" value="P-loop_SecA"/>
    <property type="match status" value="2"/>
</dbReference>
<dbReference type="Pfam" id="PF02810">
    <property type="entry name" value="SEC-C"/>
    <property type="match status" value="1"/>
</dbReference>
<dbReference type="Pfam" id="PF07517">
    <property type="entry name" value="SecA_DEAD"/>
    <property type="match status" value="1"/>
</dbReference>
<dbReference type="Pfam" id="PF01043">
    <property type="entry name" value="SecA_PP_bind"/>
    <property type="match status" value="1"/>
</dbReference>
<dbReference type="Pfam" id="PF07516">
    <property type="entry name" value="SecA_SW"/>
    <property type="match status" value="1"/>
</dbReference>
<dbReference type="PRINTS" id="PR00906">
    <property type="entry name" value="SECA"/>
</dbReference>
<dbReference type="SMART" id="SM00957">
    <property type="entry name" value="SecA_DEAD"/>
    <property type="match status" value="1"/>
</dbReference>
<dbReference type="SMART" id="SM00958">
    <property type="entry name" value="SecA_PP_bind"/>
    <property type="match status" value="1"/>
</dbReference>
<dbReference type="SUPFAM" id="SSF81886">
    <property type="entry name" value="Helical scaffold and wing domains of SecA"/>
    <property type="match status" value="1"/>
</dbReference>
<dbReference type="SUPFAM" id="SSF52540">
    <property type="entry name" value="P-loop containing nucleoside triphosphate hydrolases"/>
    <property type="match status" value="2"/>
</dbReference>
<dbReference type="SUPFAM" id="SSF81767">
    <property type="entry name" value="Pre-protein crosslinking domain of SecA"/>
    <property type="match status" value="1"/>
</dbReference>
<dbReference type="PROSITE" id="PS01312">
    <property type="entry name" value="SECA"/>
    <property type="match status" value="1"/>
</dbReference>
<dbReference type="PROSITE" id="PS51196">
    <property type="entry name" value="SECA_MOTOR_DEAD"/>
    <property type="match status" value="1"/>
</dbReference>
<organism>
    <name type="scientific">Streptococcus agalactiae serotype III (strain NEM316)</name>
    <dbReference type="NCBI Taxonomy" id="211110"/>
    <lineage>
        <taxon>Bacteria</taxon>
        <taxon>Bacillati</taxon>
        <taxon>Bacillota</taxon>
        <taxon>Bacilli</taxon>
        <taxon>Lactobacillales</taxon>
        <taxon>Streptococcaceae</taxon>
        <taxon>Streptococcus</taxon>
    </lineage>
</organism>
<gene>
    <name evidence="1" type="primary">secA1</name>
    <name type="ordered locus">gbs1731</name>
</gene>
<accession>Q8E3M6</accession>
<proteinExistence type="inferred from homology"/>
<comment type="function">
    <text evidence="1">Part of the Sec protein translocase complex. Interacts with the SecYEG preprotein conducting channel. Has a central role in coupling the hydrolysis of ATP to the transfer of proteins into and across the cell membrane, serving as an ATP-driven molecular motor driving the stepwise translocation of polypeptide chains across the membrane.</text>
</comment>
<comment type="catalytic activity">
    <reaction evidence="1">
        <text>ATP + H2O + cellular proteinSide 1 = ADP + phosphate + cellular proteinSide 2.</text>
        <dbReference type="EC" id="7.4.2.8"/>
    </reaction>
</comment>
<comment type="cofactor">
    <cofactor evidence="1">
        <name>Zn(2+)</name>
        <dbReference type="ChEBI" id="CHEBI:29105"/>
    </cofactor>
    <text evidence="1">May bind 1 zinc ion per subunit.</text>
</comment>
<comment type="subunit">
    <text evidence="1">Monomer and homodimer. Part of the essential Sec protein translocation apparatus which comprises SecA, SecYEG and auxiliary proteins SecDF. Other proteins may also be involved.</text>
</comment>
<comment type="subcellular location">
    <subcellularLocation>
        <location evidence="1">Cell membrane</location>
        <topology evidence="1">Peripheral membrane protein</topology>
        <orientation evidence="1">Cytoplasmic side</orientation>
    </subcellularLocation>
    <subcellularLocation>
        <location evidence="1">Cytoplasm</location>
    </subcellularLocation>
    <text evidence="1">Distribution is 50-50.</text>
</comment>
<comment type="similarity">
    <text evidence="1">Belongs to the SecA family.</text>
</comment>
<reference key="1">
    <citation type="journal article" date="2002" name="Mol. Microbiol.">
        <title>Genome sequence of Streptococcus agalactiae, a pathogen causing invasive neonatal disease.</title>
        <authorList>
            <person name="Glaser P."/>
            <person name="Rusniok C."/>
            <person name="Buchrieser C."/>
            <person name="Chevalier F."/>
            <person name="Frangeul L."/>
            <person name="Msadek T."/>
            <person name="Zouine M."/>
            <person name="Couve E."/>
            <person name="Lalioui L."/>
            <person name="Poyart C."/>
            <person name="Trieu-Cuot P."/>
            <person name="Kunst F."/>
        </authorList>
    </citation>
    <scope>NUCLEOTIDE SEQUENCE [LARGE SCALE GENOMIC DNA]</scope>
    <source>
        <strain>NEM316</strain>
    </source>
</reference>
<protein>
    <recommendedName>
        <fullName evidence="1">Protein translocase subunit SecA 1</fullName>
        <ecNumber evidence="1">7.4.2.8</ecNumber>
    </recommendedName>
</protein>
<feature type="chain" id="PRO_0000318437" description="Protein translocase subunit SecA 1">
    <location>
        <begin position="1"/>
        <end position="842"/>
    </location>
</feature>
<feature type="binding site" evidence="1">
    <location>
        <position position="85"/>
    </location>
    <ligand>
        <name>ATP</name>
        <dbReference type="ChEBI" id="CHEBI:30616"/>
    </ligand>
</feature>
<feature type="binding site" evidence="1">
    <location>
        <begin position="103"/>
        <end position="107"/>
    </location>
    <ligand>
        <name>ATP</name>
        <dbReference type="ChEBI" id="CHEBI:30616"/>
    </ligand>
</feature>
<feature type="binding site" evidence="1">
    <location>
        <position position="493"/>
    </location>
    <ligand>
        <name>ATP</name>
        <dbReference type="ChEBI" id="CHEBI:30616"/>
    </ligand>
</feature>
<feature type="binding site" evidence="1">
    <location>
        <position position="824"/>
    </location>
    <ligand>
        <name>Zn(2+)</name>
        <dbReference type="ChEBI" id="CHEBI:29105"/>
    </ligand>
</feature>
<feature type="binding site" evidence="1">
    <location>
        <position position="826"/>
    </location>
    <ligand>
        <name>Zn(2+)</name>
        <dbReference type="ChEBI" id="CHEBI:29105"/>
    </ligand>
</feature>
<feature type="binding site" evidence="1">
    <location>
        <position position="835"/>
    </location>
    <ligand>
        <name>Zn(2+)</name>
        <dbReference type="ChEBI" id="CHEBI:29105"/>
    </ligand>
</feature>
<feature type="binding site" evidence="1">
    <location>
        <position position="836"/>
    </location>
    <ligand>
        <name>Zn(2+)</name>
        <dbReference type="ChEBI" id="CHEBI:29105"/>
    </ligand>
</feature>
<name>SECA1_STRA3</name>